<accession>A2R3G4</accession>
<protein>
    <recommendedName>
        <fullName>Probable rhamnogalacturonase B</fullName>
        <shortName>RGase B</shortName>
        <shortName>RHG B</shortName>
        <ecNumber>3.2.1.171</ecNumber>
    </recommendedName>
</protein>
<keyword id="KW-0119">Carbohydrate metabolism</keyword>
<keyword id="KW-0961">Cell wall biogenesis/degradation</keyword>
<keyword id="KW-1015">Disulfide bond</keyword>
<keyword id="KW-0325">Glycoprotein</keyword>
<keyword id="KW-0326">Glycosidase</keyword>
<keyword id="KW-0378">Hydrolase</keyword>
<keyword id="KW-0624">Polysaccharide degradation</keyword>
<keyword id="KW-1185">Reference proteome</keyword>
<keyword id="KW-0964">Secreted</keyword>
<keyword id="KW-0732">Signal</keyword>
<evidence type="ECO:0000250" key="1"/>
<evidence type="ECO:0000255" key="2"/>
<evidence type="ECO:0000256" key="3">
    <source>
        <dbReference type="SAM" id="MobiDB-lite"/>
    </source>
</evidence>
<evidence type="ECO:0000305" key="4"/>
<sequence length="558" mass="57933">MLLDKLSVLSFLGLAPIFAAAQLSGSVGPLTSASTKAATKTCNVLDYGAKADKSTDLGAPLASAFADCKSGGLVYVPSGDYALSTWARLSGGEAWALQIDGIIYRTGTDGGNMIYIEHSSDFELFSSTSEGAMQGLGYEFHADDNWSGPRLLRLYEVTDFSVHDFILVDSPSFHFSLDTCTNGEIYNMAIRGGNHGGLDGIDVWSNNIWVHDVEVTNKDECVTVKSPSKNILIESIYCNWSGGCGMGSFGSDTNVSDITYRNIYTWSSNNMMLIKSNGGSGFVENVLLENFIGHGNAYSLDIDSYWASMSAVDGDGVQLSNITVKNWKGTEAYGAERGPVKVVCADGAPCYDITIEDFAMWTEEGDSQWYSCESAYGSGYCLQDSDDHVSYSVTTSTVSSAPSGYSATSMAADLTTDFGSTVSIPIPTIPTSFYPGATPYSALMANSASTAAASSIASHATVHSSSASVAASVPSAVAPSESIPAATSAVVSSAAAIAPSPAVGAQEGSTTSAPSFAAPSGAGNSPQGPTGASGFGEKGQQGEQGEQGEQGEQGVCYV</sequence>
<proteinExistence type="inferred from homology"/>
<name>RHGB_ASPNC</name>
<organism>
    <name type="scientific">Aspergillus niger (strain ATCC MYA-4892 / CBS 513.88 / FGSC A1513)</name>
    <dbReference type="NCBI Taxonomy" id="425011"/>
    <lineage>
        <taxon>Eukaryota</taxon>
        <taxon>Fungi</taxon>
        <taxon>Dikarya</taxon>
        <taxon>Ascomycota</taxon>
        <taxon>Pezizomycotina</taxon>
        <taxon>Eurotiomycetes</taxon>
        <taxon>Eurotiomycetidae</taxon>
        <taxon>Eurotiales</taxon>
        <taxon>Aspergillaceae</taxon>
        <taxon>Aspergillus</taxon>
        <taxon>Aspergillus subgen. Circumdati</taxon>
    </lineage>
</organism>
<dbReference type="EC" id="3.2.1.171"/>
<dbReference type="EMBL" id="AM270321">
    <property type="protein sequence ID" value="CAK48512.1"/>
    <property type="molecule type" value="Genomic_DNA"/>
</dbReference>
<dbReference type="RefSeq" id="XP_001401044.1">
    <property type="nucleotide sequence ID" value="XM_001401007.2"/>
</dbReference>
<dbReference type="SMR" id="A2R3G4"/>
<dbReference type="CAZy" id="GH28">
    <property type="family name" value="Glycoside Hydrolase Family 28"/>
</dbReference>
<dbReference type="GlyCosmos" id="A2R3G4">
    <property type="glycosylation" value="4 sites, No reported glycans"/>
</dbReference>
<dbReference type="EnsemblFungi" id="CAK48512">
    <property type="protein sequence ID" value="CAK48512"/>
    <property type="gene ID" value="An14g04200"/>
</dbReference>
<dbReference type="GeneID" id="4987277"/>
<dbReference type="KEGG" id="ang:An14g04200"/>
<dbReference type="VEuPathDB" id="FungiDB:An14g04200"/>
<dbReference type="HOGENOM" id="CLU_016031_7_2_1"/>
<dbReference type="Proteomes" id="UP000006706">
    <property type="component" value="Chromosome 1R"/>
</dbReference>
<dbReference type="GO" id="GO:0005576">
    <property type="term" value="C:extracellular region"/>
    <property type="evidence" value="ECO:0007669"/>
    <property type="project" value="UniProtKB-SubCell"/>
</dbReference>
<dbReference type="GO" id="GO:0004650">
    <property type="term" value="F:polygalacturonase activity"/>
    <property type="evidence" value="ECO:0007669"/>
    <property type="project" value="InterPro"/>
</dbReference>
<dbReference type="GO" id="GO:0046576">
    <property type="term" value="F:rhamnogalacturonan alpha-L-rhamnopyranosyl-(1-&gt;4)-alpha-D-galactopyranosyluronide lyase activity"/>
    <property type="evidence" value="ECO:0000314"/>
    <property type="project" value="AspGD"/>
</dbReference>
<dbReference type="GO" id="GO:0071555">
    <property type="term" value="P:cell wall organization"/>
    <property type="evidence" value="ECO:0007669"/>
    <property type="project" value="UniProtKB-KW"/>
</dbReference>
<dbReference type="GO" id="GO:0045490">
    <property type="term" value="P:pectin catabolic process"/>
    <property type="evidence" value="ECO:0000250"/>
    <property type="project" value="UniProtKB"/>
</dbReference>
<dbReference type="FunFam" id="2.160.20.10:FF:000025">
    <property type="entry name" value="Probable rhamnogalacturonase B"/>
    <property type="match status" value="1"/>
</dbReference>
<dbReference type="Gene3D" id="2.160.20.10">
    <property type="entry name" value="Single-stranded right-handed beta-helix, Pectin lyase-like"/>
    <property type="match status" value="1"/>
</dbReference>
<dbReference type="InterPro" id="IPR000743">
    <property type="entry name" value="Glyco_hydro_28"/>
</dbReference>
<dbReference type="InterPro" id="IPR012334">
    <property type="entry name" value="Pectin_lyas_fold"/>
</dbReference>
<dbReference type="InterPro" id="IPR011050">
    <property type="entry name" value="Pectin_lyase_fold/virulence"/>
</dbReference>
<dbReference type="PANTHER" id="PTHR31736">
    <property type="match status" value="1"/>
</dbReference>
<dbReference type="PANTHER" id="PTHR31736:SF19">
    <property type="entry name" value="PECTIN LYASE SUPERFAMILY PROTEIN-RELATED"/>
    <property type="match status" value="1"/>
</dbReference>
<dbReference type="Pfam" id="PF00295">
    <property type="entry name" value="Glyco_hydro_28"/>
    <property type="match status" value="1"/>
</dbReference>
<dbReference type="SUPFAM" id="SSF51126">
    <property type="entry name" value="Pectin lyase-like"/>
    <property type="match status" value="1"/>
</dbReference>
<gene>
    <name type="primary">rhgB</name>
    <name type="ORF">An14g04200</name>
</gene>
<feature type="signal peptide" evidence="2">
    <location>
        <begin position="1"/>
        <end position="21"/>
    </location>
</feature>
<feature type="chain" id="PRO_5000220953" description="Probable rhamnogalacturonase B">
    <location>
        <begin position="22"/>
        <end position="558"/>
    </location>
</feature>
<feature type="region of interest" description="Disordered" evidence="3">
    <location>
        <begin position="503"/>
        <end position="558"/>
    </location>
</feature>
<feature type="compositionally biased region" description="Low complexity" evidence="3">
    <location>
        <begin position="503"/>
        <end position="526"/>
    </location>
</feature>
<feature type="active site" description="Proton donor" evidence="1">
    <location>
        <position position="219"/>
    </location>
</feature>
<feature type="active site" evidence="1">
    <location>
        <position position="294"/>
    </location>
</feature>
<feature type="glycosylation site" description="N-linked (GlcNAc...) asparagine" evidence="2">
    <location>
        <position position="145"/>
    </location>
</feature>
<feature type="glycosylation site" description="N-linked (GlcNAc...) asparagine" evidence="2">
    <location>
        <position position="239"/>
    </location>
</feature>
<feature type="glycosylation site" description="N-linked (GlcNAc...) asparagine" evidence="2">
    <location>
        <position position="254"/>
    </location>
</feature>
<feature type="glycosylation site" description="N-linked (GlcNAc...) asparagine" evidence="2">
    <location>
        <position position="321"/>
    </location>
</feature>
<feature type="disulfide bond" evidence="1">
    <location>
        <begin position="42"/>
        <end position="68"/>
    </location>
</feature>
<feature type="disulfide bond" evidence="1">
    <location>
        <begin position="221"/>
        <end position="238"/>
    </location>
</feature>
<feature type="disulfide bond" evidence="1">
    <location>
        <begin position="344"/>
        <end position="350"/>
    </location>
</feature>
<feature type="disulfide bond" evidence="1">
    <location>
        <begin position="372"/>
        <end position="381"/>
    </location>
</feature>
<comment type="function">
    <text evidence="1">Pectinolytic enzymes consist of four classes of enzymes: pectine lyase, polygalacturonase, pectin methylesterase and rhamnogalacturonase. Hydrolyzes alpha-D-galacturonopyranosyl-(1,2)-alpha-L-rhamnopyranosyl linkages in the backbone of the hairy regions of pectins (By similarity).</text>
</comment>
<comment type="catalytic activity">
    <reaction>
        <text>Endohydrolysis of alpha-D-GalA-(1-&gt;2)-alpha-L-Rha glycosidic bond in the rhamnogalacturonan I backbone with initial inversion of anomeric configuration releasing oligosaccharides with beta-D-GalA at the reducing end.</text>
        <dbReference type="EC" id="3.2.1.171"/>
    </reaction>
</comment>
<comment type="subcellular location">
    <subcellularLocation>
        <location evidence="1">Secreted</location>
    </subcellularLocation>
</comment>
<comment type="similarity">
    <text evidence="4">Belongs to the glycosyl hydrolase 28 family.</text>
</comment>
<reference key="1">
    <citation type="journal article" date="2007" name="Nat. Biotechnol.">
        <title>Genome sequencing and analysis of the versatile cell factory Aspergillus niger CBS 513.88.</title>
        <authorList>
            <person name="Pel H.J."/>
            <person name="de Winde J.H."/>
            <person name="Archer D.B."/>
            <person name="Dyer P.S."/>
            <person name="Hofmann G."/>
            <person name="Schaap P.J."/>
            <person name="Turner G."/>
            <person name="de Vries R.P."/>
            <person name="Albang R."/>
            <person name="Albermann K."/>
            <person name="Andersen M.R."/>
            <person name="Bendtsen J.D."/>
            <person name="Benen J.A.E."/>
            <person name="van den Berg M."/>
            <person name="Breestraat S."/>
            <person name="Caddick M.X."/>
            <person name="Contreras R."/>
            <person name="Cornell M."/>
            <person name="Coutinho P.M."/>
            <person name="Danchin E.G.J."/>
            <person name="Debets A.J.M."/>
            <person name="Dekker P."/>
            <person name="van Dijck P.W.M."/>
            <person name="van Dijk A."/>
            <person name="Dijkhuizen L."/>
            <person name="Driessen A.J.M."/>
            <person name="d'Enfert C."/>
            <person name="Geysens S."/>
            <person name="Goosen C."/>
            <person name="Groot G.S.P."/>
            <person name="de Groot P.W.J."/>
            <person name="Guillemette T."/>
            <person name="Henrissat B."/>
            <person name="Herweijer M."/>
            <person name="van den Hombergh J.P.T.W."/>
            <person name="van den Hondel C.A.M.J.J."/>
            <person name="van der Heijden R.T.J.M."/>
            <person name="van der Kaaij R.M."/>
            <person name="Klis F.M."/>
            <person name="Kools H.J."/>
            <person name="Kubicek C.P."/>
            <person name="van Kuyk P.A."/>
            <person name="Lauber J."/>
            <person name="Lu X."/>
            <person name="van der Maarel M.J.E.C."/>
            <person name="Meulenberg R."/>
            <person name="Menke H."/>
            <person name="Mortimer M.A."/>
            <person name="Nielsen J."/>
            <person name="Oliver S.G."/>
            <person name="Olsthoorn M."/>
            <person name="Pal K."/>
            <person name="van Peij N.N.M.E."/>
            <person name="Ram A.F.J."/>
            <person name="Rinas U."/>
            <person name="Roubos J.A."/>
            <person name="Sagt C.M.J."/>
            <person name="Schmoll M."/>
            <person name="Sun J."/>
            <person name="Ussery D."/>
            <person name="Varga J."/>
            <person name="Vervecken W."/>
            <person name="van de Vondervoort P.J.J."/>
            <person name="Wedler H."/>
            <person name="Woesten H.A.B."/>
            <person name="Zeng A.-P."/>
            <person name="van Ooyen A.J.J."/>
            <person name="Visser J."/>
            <person name="Stam H."/>
        </authorList>
    </citation>
    <scope>NUCLEOTIDE SEQUENCE [LARGE SCALE GENOMIC DNA]</scope>
    <source>
        <strain>ATCC MYA-4892 / CBS 513.88 / FGSC A1513</strain>
    </source>
</reference>